<dbReference type="EC" id="3.1.-.-"/>
<dbReference type="EMBL" id="JQ423913">
    <property type="protein sequence ID" value="AFG17278.1"/>
    <property type="molecule type" value="Genomic_DNA"/>
</dbReference>
<dbReference type="SMR" id="H9T8G4"/>
<dbReference type="GO" id="GO:0004519">
    <property type="term" value="F:endonuclease activity"/>
    <property type="evidence" value="ECO:0007669"/>
    <property type="project" value="UniProtKB-KW"/>
</dbReference>
<dbReference type="GO" id="GO:0004540">
    <property type="term" value="F:RNA nuclease activity"/>
    <property type="evidence" value="ECO:0007669"/>
    <property type="project" value="InterPro"/>
</dbReference>
<dbReference type="GO" id="GO:0090729">
    <property type="term" value="F:toxin activity"/>
    <property type="evidence" value="ECO:0007669"/>
    <property type="project" value="UniProtKB-KW"/>
</dbReference>
<dbReference type="Gene3D" id="3.30.2310.30">
    <property type="match status" value="1"/>
</dbReference>
<dbReference type="InterPro" id="IPR038233">
    <property type="entry name" value="Colicin_D/E5_nuclease"/>
</dbReference>
<dbReference type="InterPro" id="IPR021964">
    <property type="entry name" value="Colicin_E5_C"/>
</dbReference>
<dbReference type="InterPro" id="IPR038234">
    <property type="entry name" value="Colicin_E5_C_sf"/>
</dbReference>
<dbReference type="InterPro" id="IPR025157">
    <property type="entry name" value="Hemagglutinin_rpt"/>
</dbReference>
<dbReference type="Pfam" id="PF12106">
    <property type="entry name" value="Colicin_E5"/>
    <property type="match status" value="1"/>
</dbReference>
<dbReference type="Pfam" id="PF13332">
    <property type="entry name" value="Fil_haemagg_2"/>
    <property type="match status" value="3"/>
</dbReference>
<dbReference type="SUPFAM" id="SSF102824">
    <property type="entry name" value="Colicin D/E5 nuclease domain"/>
    <property type="match status" value="1"/>
</dbReference>
<accession>H9T8G4</accession>
<sequence length="1269" mass="124362">SLDTTGNVDLTSANVKAGSLDLNAGNKLILDTATQTTHQVSRDGATSDKTTLGPAANLNVAGDASIKTGGDFQQNAGNLNVGGNLNANIGGNWNLGVQQTGEHKVVQRANGVSDTDLNSATGSTVNVGGKSAIGVGGDLTAQGARLDFGQGGTVAAKGNVTFGAASTTSTINANSSGDQGNRSYAETRHGADQALTGTTVKGGDTLNVVSGKDINVIGSTIDLKKGDANLLAAGDVNVGAATETHVYNSRETHSRSGVVSGTKIASSQDATSTVANGSLISADGVSIGSGKDINVQGSTVVGTHDVALNAAHDVNITTSQDTSQSSTTYQEQHSGLMSGGGLSFSVGNSKLAQQNQSSSVTNNASTVGSVDGNLTVNAGNTLHVKGSDLVAGKDVTGTATNIVVDSATDTTHQAQQQQTSKSGLTVGLSGSVGDAINNAISETQAARESAKDSNGRASALHSIAAAGDVAFGGLGAKALLDGAKGPQAPSIGVQVSVGSSHSSMQSSEDQTIQRGSSINAGGNAKLIATGNGTPKDGNITIAGSNVNAANVALVANNQVNLVNTTDTDKTQSSNSSSGSSVGVSIGTNGIGVSASMQRAHGDGNSDAAIQNNTHINASQTATIVSGGDTNVIGANVNANKVVADVGGNLNVASVQDTTVSAAHQSSAGGGFTISQTGGGASFSAQNGHADGNYAGVKEQAGIQAGSGGFDVTVKGNTDLKGAYIGSTADASKNSLTTGTLTTSDIENHSHYSANSAGFSAGASVGVSTKAVGPSSVSGSGGVTPMVFQNDSGDQSATTKSAVSAGTINITKPGEQTQDVANLNRDTTNLNGTVSKTPDVQKMLSQQADTMNAAQAAGQTVSQAIGLYADYKRDAALDAADKAYKAGDLAGAQAALNEAKGWMEGGASRAELQMGGGALIGGLGGGSALTAIGGAAGAGTSSLLANQAEKISKSVGDTTGSSLVGNIAANVAATVGGALVGGSAGAAMASNVQLYNAGNDSNNQTSNDVFASLSKKVAQAIAMTADGKAGVWNGMVNVAGVIVNLPNGGPFASPGDPGYVSLDGLKKPYKSGTSIGPDAEFWTPVLATLGLGGKAAAGTGATTTSADAATVGNGALKTASGDLSAAGNAARTQPYGNGASASPSPGTATAGSSGANAQLPTANGGVAAAGTSSATNVGKVVIDGKIGGQLEARGWTQQEVQAVVNEGPVGTTMDNRSAGKTPDGLPRNDSASVYGSKSGYVVVNDRTGEVVQVSGKNDPVWIPDSRIKWK</sequence>
<gene>
    <name type="primary">cdiA</name>
</gene>
<evidence type="ECO:0000250" key="1">
    <source>
        <dbReference type="UniProtKB" id="A0A1S4NYE3"/>
    </source>
</evidence>
<evidence type="ECO:0000250" key="2">
    <source>
        <dbReference type="UniProtKB" id="I1WVY3"/>
    </source>
</evidence>
<evidence type="ECO:0000256" key="3">
    <source>
        <dbReference type="SAM" id="MobiDB-lite"/>
    </source>
</evidence>
<evidence type="ECO:0000269" key="4">
    <source>
    </source>
</evidence>
<evidence type="ECO:0000305" key="5"/>
<evidence type="ECO:0000305" key="6">
    <source>
    </source>
</evidence>
<protein>
    <recommendedName>
        <fullName>tRNA nuclease CdiA</fullName>
        <ecNumber>3.1.-.-</ecNumber>
    </recommendedName>
    <alternativeName>
        <fullName>Toxin CdiA</fullName>
    </alternativeName>
</protein>
<organism>
    <name type="scientific">Burkholderia pseudomallei</name>
    <name type="common">Pseudomonas pseudomallei</name>
    <dbReference type="NCBI Taxonomy" id="28450"/>
    <lineage>
        <taxon>Bacteria</taxon>
        <taxon>Pseudomonadati</taxon>
        <taxon>Pseudomonadota</taxon>
        <taxon>Betaproteobacteria</taxon>
        <taxon>Burkholderiales</taxon>
        <taxon>Burkholderiaceae</taxon>
        <taxon>Burkholderia</taxon>
        <taxon>pseudomallei group</taxon>
    </lineage>
</organism>
<reference key="1">
    <citation type="journal article" date="2008" name="PLoS Negl. Trop. Dis.">
        <title>Genetic diversity and microevolution of Burkholderia pseudomallei in the environment.</title>
        <authorList>
            <person name="Chantratita N."/>
            <person name="Wuthiekanun V."/>
            <person name="Limmathurotsakul D."/>
            <person name="Vesaratchavest M."/>
            <person name="Thanwisai A."/>
            <person name="Amornchai P."/>
            <person name="Tumapa S."/>
            <person name="Feil E.J."/>
            <person name="Day N.P."/>
            <person name="Peacock S.J."/>
        </authorList>
    </citation>
    <scope>NUCLEOTIDE SEQUENCE [GENOMIC DNA]</scope>
    <source>
        <strain>E478</strain>
    </source>
</reference>
<reference key="2">
    <citation type="journal article" date="2012" name="Mol. Microbiol.">
        <title>The toxin/immunity network of Burkholderia pseudomallei contact-dependent growth inhibition (CDI) systems.</title>
        <authorList>
            <person name="Nikolakakis K."/>
            <person name="Amber S."/>
            <person name="Wilbur J.S."/>
            <person name="Diner E.J."/>
            <person name="Aoki S.K."/>
            <person name="Poole S.J."/>
            <person name="Tuanyok A."/>
            <person name="Keim P.S."/>
            <person name="Peacock S."/>
            <person name="Hayes C.S."/>
            <person name="Low D.A."/>
        </authorList>
    </citation>
    <scope>FUNCTION</scope>
    <scope>INTERACTION WITH CDII</scope>
    <scope>SUBUNIT</scope>
    <scope>DOMAIN</scope>
    <scope>EXPRESSION IN E.COLI</scope>
    <scope>MUTAGENESIS OF ASP-1263</scope>
    <source>
        <strain>E478</strain>
    </source>
</reference>
<keyword id="KW-0255">Endonuclease</keyword>
<keyword id="KW-0378">Hydrolase</keyword>
<keyword id="KW-0540">Nuclease</keyword>
<keyword id="KW-1266">Target cell cytoplasm</keyword>
<keyword id="KW-0800">Toxin</keyword>
<keyword id="KW-0843">Virulence</keyword>
<comment type="function">
    <text evidence="4">Toxic component of a toxin-immunity protein module, which functions as a cellular contact-dependent growth inhibition (CDI) system. CDI modules allow bacteria to communicate with and inhibit the growth of closely related neighboring bacteria in a contact-dependent fashion. The C-terminal 282 residues (CT domain) acts as a tRNA endonuclease on some (tRNA1(Tyr), tRNA(Asn), tRNA(His)), but not all E.coli tRNAs, and inhibits growth in E.coli. Toxic activity is neutralized by coexpression of the cognate immunity protein CdiI in E.coli, but not by non-cognate immunity proteins from other strains of B.pseudomallei.</text>
</comment>
<comment type="function">
    <text evidence="1 2">The CdiA protein is thought to be exported from the cell through the central lumen of CdiB, the other half of its two-partner system (TPS). The TPS domain probably remains associated with CdiB while the FHA-1 domain forms an extended filament with the receptor-binding domain (RBD) at its extremity; in the secretion arrested state the C-terminus of the RBD domain form a hairpin-like structure as the FHA-2, PT and CT domains are periplasmic. Upon binding to a target cell outer membrane receptor a signal is transmitted to activate secretion. The filament elongates slightly, the rest of CdiA is secreted and the FHA-2 domain becomes stably associated with the target cell's outer membrane where it facilitates entry of the toxic CT domain into the target cell periplasm. From there the toxic CT domain is cleaved and gains access to the target cell cytoplasm via an inner membrane protein.</text>
</comment>
<comment type="subunit">
    <text evidence="4">Specifically interacts with cognate immunity protein CdiI, which blocks its tRNA nuclease activity.</text>
</comment>
<comment type="subcellular location">
    <subcellularLocation>
        <location evidence="2">Target cell</location>
        <location evidence="2">Target cell cytoplasm</location>
    </subcellularLocation>
    <text evidence="2">Secreted to the cell surface by CdiB, its two partner secretion pathway (TPS) partner.</text>
</comment>
<comment type="domain">
    <text evidence="4">The C-terminal domain has toxic activity, which can be exchanged between N-terminal sections from different toxin molecules.</text>
</comment>
<comment type="similarity">
    <text evidence="5">Belongs to the CdiA toxin family.</text>
</comment>
<name>CDIA8_BURPE</name>
<feature type="chain" id="PRO_0000429692" description="tRNA nuclease CdiA">
    <location>
        <begin position="1" status="less than"/>
        <end position="1269"/>
    </location>
</feature>
<feature type="region of interest" description="FHA-2" evidence="5">
    <location>
        <begin position="1" status="less than"/>
        <end position="251"/>
    </location>
</feature>
<feature type="region of interest" description="Pretoxin (PT) domain" evidence="5">
    <location>
        <begin position="252"/>
        <end position="991"/>
    </location>
</feature>
<feature type="region of interest" description="Disordered" evidence="3">
    <location>
        <begin position="317"/>
        <end position="340"/>
    </location>
</feature>
<feature type="region of interest" description="Disordered" evidence="3">
    <location>
        <begin position="491"/>
        <end position="518"/>
    </location>
</feature>
<feature type="region of interest" description="CT domain, has tRNA nuclease activity" evidence="4">
    <location>
        <begin position="981"/>
        <end position="1269"/>
    </location>
</feature>
<feature type="region of interest" description="Disordered" evidence="3">
    <location>
        <begin position="1124"/>
        <end position="1155"/>
    </location>
</feature>
<feature type="region of interest" description="Disordered" evidence="3">
    <location>
        <begin position="1207"/>
        <end position="1231"/>
    </location>
</feature>
<feature type="short sequence motif" description="ELYN CT motif" evidence="6">
    <location>
        <begin position="992"/>
        <end position="995"/>
    </location>
</feature>
<feature type="compositionally biased region" description="Low complexity" evidence="3">
    <location>
        <begin position="317"/>
        <end position="336"/>
    </location>
</feature>
<feature type="compositionally biased region" description="Low complexity" evidence="3">
    <location>
        <begin position="491"/>
        <end position="507"/>
    </location>
</feature>
<feature type="compositionally biased region" description="Polar residues" evidence="3">
    <location>
        <begin position="508"/>
        <end position="518"/>
    </location>
</feature>
<feature type="compositionally biased region" description="Low complexity" evidence="3">
    <location>
        <begin position="1135"/>
        <end position="1155"/>
    </location>
</feature>
<feature type="mutagenesis site" description="CT domain not toxic in E.coli." evidence="4">
    <original>D</original>
    <variation>A</variation>
    <location>
        <position position="1263"/>
    </location>
</feature>
<feature type="non-terminal residue">
    <location>
        <position position="1"/>
    </location>
</feature>
<proteinExistence type="evidence at protein level"/>